<evidence type="ECO:0000255" key="1">
    <source>
        <dbReference type="HAMAP-Rule" id="MF_00689"/>
    </source>
</evidence>
<evidence type="ECO:0000305" key="2"/>
<protein>
    <recommendedName>
        <fullName evidence="1">Aspartate/glutamate leucyltransferase</fullName>
        <ecNumber evidence="1">2.3.2.29</ecNumber>
    </recommendedName>
</protein>
<sequence length="273" mass="30926">MRHTLPIAPQFYVTAPQPCPYLAGRMERKLFTALQGEGAERLNNALSQQGFRRSQNVLYRPSCADCAACLSARIDVSAFRASRSQKRAMRRNAHLTRRATSPWATDEQYELFRRYLDSRHADGGMADMDVFEFAAMIEETPIRSRVIEYAHRDTRALIGVSLTDVLDDGLSMVYSFYDPDLHRDSLGTHMILDHIAIAREAGLPYVYLGYWVPGSPKMGYKSRFSGLEIYLGGRWQAMTDPEAHDAIRHPLSTDPIAEQVANIQLPDRWPTGD</sequence>
<keyword id="KW-0012">Acyltransferase</keyword>
<keyword id="KW-0963">Cytoplasm</keyword>
<keyword id="KW-1185">Reference proteome</keyword>
<keyword id="KW-0808">Transferase</keyword>
<gene>
    <name evidence="1" type="primary">bpt</name>
    <name type="ordered locus">SPO2569</name>
</gene>
<accession>Q5LQC3</accession>
<proteinExistence type="inferred from homology"/>
<organism>
    <name type="scientific">Ruegeria pomeroyi (strain ATCC 700808 / DSM 15171 / DSS-3)</name>
    <name type="common">Silicibacter pomeroyi</name>
    <dbReference type="NCBI Taxonomy" id="246200"/>
    <lineage>
        <taxon>Bacteria</taxon>
        <taxon>Pseudomonadati</taxon>
        <taxon>Pseudomonadota</taxon>
        <taxon>Alphaproteobacteria</taxon>
        <taxon>Rhodobacterales</taxon>
        <taxon>Roseobacteraceae</taxon>
        <taxon>Ruegeria</taxon>
    </lineage>
</organism>
<comment type="function">
    <text evidence="1">Functions in the N-end rule pathway of protein degradation where it conjugates Leu from its aminoacyl-tRNA to the N-termini of proteins containing an N-terminal aspartate or glutamate.</text>
</comment>
<comment type="catalytic activity">
    <reaction evidence="1">
        <text>N-terminal L-glutamyl-[protein] + L-leucyl-tRNA(Leu) = N-terminal L-leucyl-L-glutamyl-[protein] + tRNA(Leu) + H(+)</text>
        <dbReference type="Rhea" id="RHEA:50412"/>
        <dbReference type="Rhea" id="RHEA-COMP:9613"/>
        <dbReference type="Rhea" id="RHEA-COMP:9622"/>
        <dbReference type="Rhea" id="RHEA-COMP:12664"/>
        <dbReference type="Rhea" id="RHEA-COMP:12668"/>
        <dbReference type="ChEBI" id="CHEBI:15378"/>
        <dbReference type="ChEBI" id="CHEBI:64721"/>
        <dbReference type="ChEBI" id="CHEBI:78442"/>
        <dbReference type="ChEBI" id="CHEBI:78494"/>
        <dbReference type="ChEBI" id="CHEBI:133041"/>
        <dbReference type="EC" id="2.3.2.29"/>
    </reaction>
</comment>
<comment type="catalytic activity">
    <reaction evidence="1">
        <text>N-terminal L-aspartyl-[protein] + L-leucyl-tRNA(Leu) = N-terminal L-leucyl-L-aspartyl-[protein] + tRNA(Leu) + H(+)</text>
        <dbReference type="Rhea" id="RHEA:50420"/>
        <dbReference type="Rhea" id="RHEA-COMP:9613"/>
        <dbReference type="Rhea" id="RHEA-COMP:9622"/>
        <dbReference type="Rhea" id="RHEA-COMP:12669"/>
        <dbReference type="Rhea" id="RHEA-COMP:12674"/>
        <dbReference type="ChEBI" id="CHEBI:15378"/>
        <dbReference type="ChEBI" id="CHEBI:64720"/>
        <dbReference type="ChEBI" id="CHEBI:78442"/>
        <dbReference type="ChEBI" id="CHEBI:78494"/>
        <dbReference type="ChEBI" id="CHEBI:133042"/>
        <dbReference type="EC" id="2.3.2.29"/>
    </reaction>
</comment>
<comment type="subcellular location">
    <subcellularLocation>
        <location evidence="1">Cytoplasm</location>
    </subcellularLocation>
</comment>
<comment type="similarity">
    <text evidence="1">Belongs to the R-transferase family. Bpt subfamily.</text>
</comment>
<comment type="sequence caution" evidence="2">
    <conflict type="erroneous initiation">
        <sequence resource="EMBL-CDS" id="AAV95817"/>
    </conflict>
</comment>
<name>BPT_RUEPO</name>
<dbReference type="EC" id="2.3.2.29" evidence="1"/>
<dbReference type="EMBL" id="CP000031">
    <property type="protein sequence ID" value="AAV95817.1"/>
    <property type="status" value="ALT_INIT"/>
    <property type="molecule type" value="Genomic_DNA"/>
</dbReference>
<dbReference type="RefSeq" id="WP_011048274.1">
    <property type="nucleotide sequence ID" value="NC_003911.12"/>
</dbReference>
<dbReference type="SMR" id="Q5LQC3"/>
<dbReference type="STRING" id="246200.SPO2569"/>
<dbReference type="PaxDb" id="246200-SPO2569"/>
<dbReference type="KEGG" id="sil:SPO2569"/>
<dbReference type="eggNOG" id="COG2935">
    <property type="taxonomic scope" value="Bacteria"/>
</dbReference>
<dbReference type="HOGENOM" id="CLU_077607_1_0_5"/>
<dbReference type="OrthoDB" id="9782022at2"/>
<dbReference type="Proteomes" id="UP000001023">
    <property type="component" value="Chromosome"/>
</dbReference>
<dbReference type="GO" id="GO:0005737">
    <property type="term" value="C:cytoplasm"/>
    <property type="evidence" value="ECO:0007669"/>
    <property type="project" value="UniProtKB-SubCell"/>
</dbReference>
<dbReference type="GO" id="GO:0004057">
    <property type="term" value="F:arginyl-tRNA--protein transferase activity"/>
    <property type="evidence" value="ECO:0007669"/>
    <property type="project" value="InterPro"/>
</dbReference>
<dbReference type="GO" id="GO:0008914">
    <property type="term" value="F:leucyl-tRNA--protein transferase activity"/>
    <property type="evidence" value="ECO:0007669"/>
    <property type="project" value="UniProtKB-UniRule"/>
</dbReference>
<dbReference type="GO" id="GO:0071596">
    <property type="term" value="P:ubiquitin-dependent protein catabolic process via the N-end rule pathway"/>
    <property type="evidence" value="ECO:0007669"/>
    <property type="project" value="InterPro"/>
</dbReference>
<dbReference type="HAMAP" id="MF_00689">
    <property type="entry name" value="Bpt"/>
    <property type="match status" value="1"/>
</dbReference>
<dbReference type="InterPro" id="IPR016181">
    <property type="entry name" value="Acyl_CoA_acyltransferase"/>
</dbReference>
<dbReference type="InterPro" id="IPR017138">
    <property type="entry name" value="Asp_Glu_LeuTrfase"/>
</dbReference>
<dbReference type="InterPro" id="IPR030700">
    <property type="entry name" value="N-end_Aminoacyl_Trfase"/>
</dbReference>
<dbReference type="InterPro" id="IPR007472">
    <property type="entry name" value="N-end_Aminoacyl_Trfase_C"/>
</dbReference>
<dbReference type="InterPro" id="IPR007471">
    <property type="entry name" value="N-end_Aminoacyl_Trfase_N"/>
</dbReference>
<dbReference type="NCBIfam" id="NF002341">
    <property type="entry name" value="PRK01305.1-1"/>
    <property type="match status" value="1"/>
</dbReference>
<dbReference type="NCBIfam" id="NF002342">
    <property type="entry name" value="PRK01305.1-3"/>
    <property type="match status" value="1"/>
</dbReference>
<dbReference type="NCBIfam" id="NF002343">
    <property type="entry name" value="PRK01305.1-4"/>
    <property type="match status" value="1"/>
</dbReference>
<dbReference type="NCBIfam" id="NF002346">
    <property type="entry name" value="PRK01305.2-3"/>
    <property type="match status" value="1"/>
</dbReference>
<dbReference type="PANTHER" id="PTHR21367">
    <property type="entry name" value="ARGININE-TRNA-PROTEIN TRANSFERASE 1"/>
    <property type="match status" value="1"/>
</dbReference>
<dbReference type="PANTHER" id="PTHR21367:SF1">
    <property type="entry name" value="ARGINYL-TRNA--PROTEIN TRANSFERASE 1"/>
    <property type="match status" value="1"/>
</dbReference>
<dbReference type="Pfam" id="PF04377">
    <property type="entry name" value="ATE_C"/>
    <property type="match status" value="1"/>
</dbReference>
<dbReference type="Pfam" id="PF04376">
    <property type="entry name" value="ATE_N"/>
    <property type="match status" value="1"/>
</dbReference>
<dbReference type="PIRSF" id="PIRSF037208">
    <property type="entry name" value="ATE_pro_prd"/>
    <property type="match status" value="1"/>
</dbReference>
<dbReference type="SUPFAM" id="SSF55729">
    <property type="entry name" value="Acyl-CoA N-acyltransferases (Nat)"/>
    <property type="match status" value="1"/>
</dbReference>
<reference key="1">
    <citation type="journal article" date="2004" name="Nature">
        <title>Genome sequence of Silicibacter pomeroyi reveals adaptations to the marine environment.</title>
        <authorList>
            <person name="Moran M.A."/>
            <person name="Buchan A."/>
            <person name="Gonzalez J.M."/>
            <person name="Heidelberg J.F."/>
            <person name="Whitman W.B."/>
            <person name="Kiene R.P."/>
            <person name="Henriksen J.R."/>
            <person name="King G.M."/>
            <person name="Belas R."/>
            <person name="Fuqua C."/>
            <person name="Brinkac L.M."/>
            <person name="Lewis M."/>
            <person name="Johri S."/>
            <person name="Weaver B."/>
            <person name="Pai G."/>
            <person name="Eisen J.A."/>
            <person name="Rahe E."/>
            <person name="Sheldon W.M."/>
            <person name="Ye W."/>
            <person name="Miller T.R."/>
            <person name="Carlton J."/>
            <person name="Rasko D.A."/>
            <person name="Paulsen I.T."/>
            <person name="Ren Q."/>
            <person name="Daugherty S.C."/>
            <person name="DeBoy R.T."/>
            <person name="Dodson R.J."/>
            <person name="Durkin A.S."/>
            <person name="Madupu R."/>
            <person name="Nelson W.C."/>
            <person name="Sullivan S.A."/>
            <person name="Rosovitz M.J."/>
            <person name="Haft D.H."/>
            <person name="Selengut J."/>
            <person name="Ward N."/>
        </authorList>
    </citation>
    <scope>NUCLEOTIDE SEQUENCE [LARGE SCALE GENOMIC DNA]</scope>
    <source>
        <strain>ATCC 700808 / DSM 15171 / DSS-3</strain>
    </source>
</reference>
<reference key="2">
    <citation type="journal article" date="2014" name="Stand. Genomic Sci.">
        <title>An updated genome annotation for the model marine bacterium Ruegeria pomeroyi DSS-3.</title>
        <authorList>
            <person name="Rivers A.R."/>
            <person name="Smith C.B."/>
            <person name="Moran M.A."/>
        </authorList>
    </citation>
    <scope>GENOME REANNOTATION</scope>
    <source>
        <strain>ATCC 700808 / DSM 15171 / DSS-3</strain>
    </source>
</reference>
<feature type="chain" id="PRO_0000263218" description="Aspartate/glutamate leucyltransferase">
    <location>
        <begin position="1"/>
        <end position="273"/>
    </location>
</feature>